<comment type="function">
    <text evidence="1">Promotes cell adhesion and matrix assembly.</text>
</comment>
<comment type="subunit">
    <text evidence="1">Binds to various extracellular matrix proteins.</text>
</comment>
<comment type="subcellular location">
    <subcellularLocation>
        <location evidence="1">Secreted</location>
        <location evidence="1">Extracellular space</location>
        <location evidence="1">Extracellular matrix</location>
    </subcellularLocation>
</comment>
<comment type="alternative products">
    <event type="alternative splicing"/>
    <isoform>
        <id>Q90X49-1</id>
        <name>1</name>
        <sequence type="displayed"/>
    </isoform>
    <isoform>
        <id>Q90X49-2</id>
        <name>2</name>
        <sequence type="described" ref="VSP_024139"/>
    </isoform>
</comment>
<comment type="similarity">
    <text evidence="5">Belongs to the CCDC80 family.</text>
</comment>
<proteinExistence type="evidence at transcript level"/>
<protein>
    <recommendedName>
        <fullName>Coiled-coil domain-containing protein 80</fullName>
    </recommendedName>
</protein>
<accession>Q90X49</accession>
<accession>Q5EAQ8</accession>
<reference key="1">
    <citation type="journal article" date="2013" name="Nature">
        <title>The zebrafish reference genome sequence and its relationship to the human genome.</title>
        <authorList>
            <person name="Howe K."/>
            <person name="Clark M.D."/>
            <person name="Torroja C.F."/>
            <person name="Torrance J."/>
            <person name="Berthelot C."/>
            <person name="Muffato M."/>
            <person name="Collins J.E."/>
            <person name="Humphray S."/>
            <person name="McLaren K."/>
            <person name="Matthews L."/>
            <person name="McLaren S."/>
            <person name="Sealy I."/>
            <person name="Caccamo M."/>
            <person name="Churcher C."/>
            <person name="Scott C."/>
            <person name="Barrett J.C."/>
            <person name="Koch R."/>
            <person name="Rauch G.J."/>
            <person name="White S."/>
            <person name="Chow W."/>
            <person name="Kilian B."/>
            <person name="Quintais L.T."/>
            <person name="Guerra-Assuncao J.A."/>
            <person name="Zhou Y."/>
            <person name="Gu Y."/>
            <person name="Yen J."/>
            <person name="Vogel J.H."/>
            <person name="Eyre T."/>
            <person name="Redmond S."/>
            <person name="Banerjee R."/>
            <person name="Chi J."/>
            <person name="Fu B."/>
            <person name="Langley E."/>
            <person name="Maguire S.F."/>
            <person name="Laird G.K."/>
            <person name="Lloyd D."/>
            <person name="Kenyon E."/>
            <person name="Donaldson S."/>
            <person name="Sehra H."/>
            <person name="Almeida-King J."/>
            <person name="Loveland J."/>
            <person name="Trevanion S."/>
            <person name="Jones M."/>
            <person name="Quail M."/>
            <person name="Willey D."/>
            <person name="Hunt A."/>
            <person name="Burton J."/>
            <person name="Sims S."/>
            <person name="McLay K."/>
            <person name="Plumb B."/>
            <person name="Davis J."/>
            <person name="Clee C."/>
            <person name="Oliver K."/>
            <person name="Clark R."/>
            <person name="Riddle C."/>
            <person name="Elliot D."/>
            <person name="Threadgold G."/>
            <person name="Harden G."/>
            <person name="Ware D."/>
            <person name="Begum S."/>
            <person name="Mortimore B."/>
            <person name="Kerry G."/>
            <person name="Heath P."/>
            <person name="Phillimore B."/>
            <person name="Tracey A."/>
            <person name="Corby N."/>
            <person name="Dunn M."/>
            <person name="Johnson C."/>
            <person name="Wood J."/>
            <person name="Clark S."/>
            <person name="Pelan S."/>
            <person name="Griffiths G."/>
            <person name="Smith M."/>
            <person name="Glithero R."/>
            <person name="Howden P."/>
            <person name="Barker N."/>
            <person name="Lloyd C."/>
            <person name="Stevens C."/>
            <person name="Harley J."/>
            <person name="Holt K."/>
            <person name="Panagiotidis G."/>
            <person name="Lovell J."/>
            <person name="Beasley H."/>
            <person name="Henderson C."/>
            <person name="Gordon D."/>
            <person name="Auger K."/>
            <person name="Wright D."/>
            <person name="Collins J."/>
            <person name="Raisen C."/>
            <person name="Dyer L."/>
            <person name="Leung K."/>
            <person name="Robertson L."/>
            <person name="Ambridge K."/>
            <person name="Leongamornlert D."/>
            <person name="McGuire S."/>
            <person name="Gilderthorp R."/>
            <person name="Griffiths C."/>
            <person name="Manthravadi D."/>
            <person name="Nichol S."/>
            <person name="Barker G."/>
            <person name="Whitehead S."/>
            <person name="Kay M."/>
            <person name="Brown J."/>
            <person name="Murnane C."/>
            <person name="Gray E."/>
            <person name="Humphries M."/>
            <person name="Sycamore N."/>
            <person name="Barker D."/>
            <person name="Saunders D."/>
            <person name="Wallis J."/>
            <person name="Babbage A."/>
            <person name="Hammond S."/>
            <person name="Mashreghi-Mohammadi M."/>
            <person name="Barr L."/>
            <person name="Martin S."/>
            <person name="Wray P."/>
            <person name="Ellington A."/>
            <person name="Matthews N."/>
            <person name="Ellwood M."/>
            <person name="Woodmansey R."/>
            <person name="Clark G."/>
            <person name="Cooper J."/>
            <person name="Tromans A."/>
            <person name="Grafham D."/>
            <person name="Skuce C."/>
            <person name="Pandian R."/>
            <person name="Andrews R."/>
            <person name="Harrison E."/>
            <person name="Kimberley A."/>
            <person name="Garnett J."/>
            <person name="Fosker N."/>
            <person name="Hall R."/>
            <person name="Garner P."/>
            <person name="Kelly D."/>
            <person name="Bird C."/>
            <person name="Palmer S."/>
            <person name="Gehring I."/>
            <person name="Berger A."/>
            <person name="Dooley C.M."/>
            <person name="Ersan-Urun Z."/>
            <person name="Eser C."/>
            <person name="Geiger H."/>
            <person name="Geisler M."/>
            <person name="Karotki L."/>
            <person name="Kirn A."/>
            <person name="Konantz J."/>
            <person name="Konantz M."/>
            <person name="Oberlander M."/>
            <person name="Rudolph-Geiger S."/>
            <person name="Teucke M."/>
            <person name="Lanz C."/>
            <person name="Raddatz G."/>
            <person name="Osoegawa K."/>
            <person name="Zhu B."/>
            <person name="Rapp A."/>
            <person name="Widaa S."/>
            <person name="Langford C."/>
            <person name="Yang F."/>
            <person name="Schuster S.C."/>
            <person name="Carter N.P."/>
            <person name="Harrow J."/>
            <person name="Ning Z."/>
            <person name="Herrero J."/>
            <person name="Searle S.M."/>
            <person name="Enright A."/>
            <person name="Geisler R."/>
            <person name="Plasterk R.H."/>
            <person name="Lee C."/>
            <person name="Westerfield M."/>
            <person name="de Jong P.J."/>
            <person name="Zon L.I."/>
            <person name="Postlethwait J.H."/>
            <person name="Nusslein-Volhard C."/>
            <person name="Hubbard T.J."/>
            <person name="Roest Crollius H."/>
            <person name="Rogers J."/>
            <person name="Stemple D.L."/>
        </authorList>
    </citation>
    <scope>NUCLEOTIDE SEQUENCE [LARGE SCALE GENOMIC DNA]</scope>
    <source>
        <strain>Tuebingen</strain>
    </source>
</reference>
<reference key="2">
    <citation type="submission" date="2005-02" db="EMBL/GenBank/DDBJ databases">
        <authorList>
            <consortium name="NIH - Zebrafish Gene Collection (ZGC) project"/>
        </authorList>
    </citation>
    <scope>NUCLEOTIDE SEQUENCE [LARGE SCALE MRNA] (ISOFORM 2)</scope>
    <source>
        <tissue>Embryo</tissue>
    </source>
</reference>
<keyword id="KW-0025">Alternative splicing</keyword>
<keyword id="KW-0272">Extracellular matrix</keyword>
<keyword id="KW-1185">Reference proteome</keyword>
<keyword id="KW-0964">Secreted</keyword>
<keyword id="KW-0732">Signal</keyword>
<gene>
    <name type="primary">ccdc80</name>
    <name type="synonym">ssg1</name>
    <name type="ORF">si:bz20i5.2</name>
    <name type="ORF">zgc:113236</name>
</gene>
<feature type="signal peptide" evidence="2">
    <location>
        <begin position="1"/>
        <end position="18"/>
    </location>
</feature>
<feature type="chain" id="PRO_0000282422" description="Coiled-coil domain-containing protein 80">
    <location>
        <begin position="19"/>
        <end position="867"/>
    </location>
</feature>
<feature type="region of interest" description="Disordered" evidence="3">
    <location>
        <begin position="83"/>
        <end position="121"/>
    </location>
</feature>
<feature type="region of interest" description="Disordered" evidence="3">
    <location>
        <begin position="282"/>
        <end position="539"/>
    </location>
</feature>
<feature type="compositionally biased region" description="Polar residues" evidence="3">
    <location>
        <begin position="95"/>
        <end position="104"/>
    </location>
</feature>
<feature type="compositionally biased region" description="Basic and acidic residues" evidence="3">
    <location>
        <begin position="288"/>
        <end position="297"/>
    </location>
</feature>
<feature type="compositionally biased region" description="Low complexity" evidence="3">
    <location>
        <begin position="301"/>
        <end position="370"/>
    </location>
</feature>
<feature type="compositionally biased region" description="Basic and acidic residues" evidence="3">
    <location>
        <begin position="401"/>
        <end position="412"/>
    </location>
</feature>
<feature type="compositionally biased region" description="Basic residues" evidence="3">
    <location>
        <begin position="426"/>
        <end position="435"/>
    </location>
</feature>
<feature type="compositionally biased region" description="Basic and acidic residues" evidence="3">
    <location>
        <begin position="436"/>
        <end position="451"/>
    </location>
</feature>
<feature type="compositionally biased region" description="Basic residues" evidence="3">
    <location>
        <begin position="471"/>
        <end position="483"/>
    </location>
</feature>
<feature type="compositionally biased region" description="Basic and acidic residues" evidence="3">
    <location>
        <begin position="484"/>
        <end position="504"/>
    </location>
</feature>
<feature type="compositionally biased region" description="Basic and acidic residues" evidence="3">
    <location>
        <begin position="514"/>
        <end position="523"/>
    </location>
</feature>
<feature type="splice variant" id="VSP_024139" description="In isoform 2." evidence="4">
    <location>
        <begin position="1"/>
        <end position="658"/>
    </location>
</feature>
<feature type="sequence conflict" description="In Ref. 2; AAH90295." evidence="5" ref="2">
    <original>L</original>
    <variation>F</variation>
    <location>
        <position position="751"/>
    </location>
</feature>
<evidence type="ECO:0000250" key="1"/>
<evidence type="ECO:0000255" key="2"/>
<evidence type="ECO:0000256" key="3">
    <source>
        <dbReference type="SAM" id="MobiDB-lite"/>
    </source>
</evidence>
<evidence type="ECO:0000303" key="4">
    <source ref="2"/>
</evidence>
<evidence type="ECO:0000305" key="5"/>
<name>CCD80_DANRE</name>
<dbReference type="EMBL" id="AL590146">
    <property type="protein sequence ID" value="CAC94894.1"/>
    <property type="molecule type" value="Genomic_DNA"/>
</dbReference>
<dbReference type="EMBL" id="BC090295">
    <property type="protein sequence ID" value="AAH90295.1"/>
    <property type="molecule type" value="mRNA"/>
</dbReference>
<dbReference type="RefSeq" id="NP_001007199.1">
    <molecule id="Q90X49-1"/>
    <property type="nucleotide sequence ID" value="NM_001007198.1"/>
</dbReference>
<dbReference type="FunCoup" id="Q90X49">
    <property type="interactions" value="1643"/>
</dbReference>
<dbReference type="STRING" id="7955.ENSDARP00000000005"/>
<dbReference type="PaxDb" id="7955-ENSDARP00000000005"/>
<dbReference type="Ensembl" id="ENSDART00000000005">
    <molecule id="Q90X49-1"/>
    <property type="protein sequence ID" value="ENSDARP00000000005"/>
    <property type="gene ID" value="ENSDARG00000000002"/>
</dbReference>
<dbReference type="GeneID" id="368419"/>
<dbReference type="KEGG" id="dre:368419"/>
<dbReference type="AGR" id="ZFIN:ZDB-GENE-030616-56"/>
<dbReference type="CTD" id="151887"/>
<dbReference type="ZFIN" id="ZDB-GENE-030616-56">
    <property type="gene designation" value="ccdc80"/>
</dbReference>
<dbReference type="eggNOG" id="ENOG502QRG7">
    <property type="taxonomic scope" value="Eukaryota"/>
</dbReference>
<dbReference type="HOGENOM" id="CLU_013508_0_0_1"/>
<dbReference type="InParanoid" id="Q90X49"/>
<dbReference type="OMA" id="DMRVKQY"/>
<dbReference type="OrthoDB" id="9898686at2759"/>
<dbReference type="PhylomeDB" id="Q90X49"/>
<dbReference type="TreeFam" id="TF332926"/>
<dbReference type="PRO" id="PR:Q90X49"/>
<dbReference type="Proteomes" id="UP000000437">
    <property type="component" value="Chromosome 9"/>
</dbReference>
<dbReference type="Bgee" id="ENSDARG00000000002">
    <property type="expression patterns" value="Expressed in zone of skin and 28 other cell types or tissues"/>
</dbReference>
<dbReference type="ExpressionAtlas" id="Q90X49">
    <property type="expression patterns" value="baseline and differential"/>
</dbReference>
<dbReference type="GO" id="GO:0005604">
    <property type="term" value="C:basement membrane"/>
    <property type="evidence" value="ECO:0000318"/>
    <property type="project" value="GO_Central"/>
</dbReference>
<dbReference type="GO" id="GO:0005576">
    <property type="term" value="C:extracellular region"/>
    <property type="evidence" value="ECO:0007669"/>
    <property type="project" value="UniProtKB-KW"/>
</dbReference>
<dbReference type="GO" id="GO:0030198">
    <property type="term" value="P:extracellular matrix organization"/>
    <property type="evidence" value="ECO:0000318"/>
    <property type="project" value="GO_Central"/>
</dbReference>
<dbReference type="GO" id="GO:0010811">
    <property type="term" value="P:positive regulation of cell-substrate adhesion"/>
    <property type="evidence" value="ECO:0000318"/>
    <property type="project" value="GO_Central"/>
</dbReference>
<dbReference type="GO" id="GO:0001756">
    <property type="term" value="P:somitogenesis"/>
    <property type="evidence" value="ECO:0000315"/>
    <property type="project" value="ZFIN"/>
</dbReference>
<dbReference type="InterPro" id="IPR025232">
    <property type="entry name" value="DUF4174"/>
</dbReference>
<dbReference type="PANTHER" id="PTHR46792">
    <property type="entry name" value="COILED-COIL DOMAIN-CONTAINING PROTEIN 80"/>
    <property type="match status" value="1"/>
</dbReference>
<dbReference type="PANTHER" id="PTHR46792:SF2">
    <property type="entry name" value="COILED-COIL DOMAIN-CONTAINING PROTEIN 80"/>
    <property type="match status" value="1"/>
</dbReference>
<dbReference type="Pfam" id="PF13778">
    <property type="entry name" value="DUF4174"/>
    <property type="match status" value="3"/>
</dbReference>
<organism>
    <name type="scientific">Danio rerio</name>
    <name type="common">Zebrafish</name>
    <name type="synonym">Brachydanio rerio</name>
    <dbReference type="NCBI Taxonomy" id="7955"/>
    <lineage>
        <taxon>Eukaryota</taxon>
        <taxon>Metazoa</taxon>
        <taxon>Chordata</taxon>
        <taxon>Craniata</taxon>
        <taxon>Vertebrata</taxon>
        <taxon>Euteleostomi</taxon>
        <taxon>Actinopterygii</taxon>
        <taxon>Neopterygii</taxon>
        <taxon>Teleostei</taxon>
        <taxon>Ostariophysi</taxon>
        <taxon>Cypriniformes</taxon>
        <taxon>Danionidae</taxon>
        <taxon>Danioninae</taxon>
        <taxon>Danio</taxon>
    </lineage>
</organism>
<sequence length="867" mass="99920">MRARYMLGFGVLCLLTWAVYVSESSPTDKQAKLRLMSVRRARQNKSRQGQIIKTRASSTWINDKRQQMQGDEGVQFRRNVQSRKVLAQRRPAQGGTRNPIQQDDGTPGARARVSRMPSSAGSPNLLASFAGKNRLLVISAPHDSDGYYRLMMSLLKPEVYCELAERHVHQIVMFHQEGELGGKIRRITNEGKVMEEPLDTALIPRLMTFLKLEKGKFGMVLLKKTLQVEERYPYPVRLEAMYEVIDQSPMRKMEKVRQKGFVQKCKGAGVEGQVVEGVLTTDSQVDPPTERRKEIRKPIRRPTTTTTPAPTRPTTTTTTTKATTTTTTRPPTTTRSTTTTTTTTTTTTRPTTTTTRTTTTPRTTRANTTPQWIPAHKTTAEPYYYNRRDRYQTTSPPTDSARYRDNHTSKKEYNHRHTNTIPTQHKPTKVRPTKKKNGDKDISNAYEEKYDVGVPTDAYPEEKEEEIVPTKRGKGKTDKKKKKDKTDKLSKKDKAERRGKDGKGGKKNGKKVPKILEKEDYQKPTKRPPPPPPPKGTLATFLDYFESRRRLILITSPTEENSMYIQQRDEYLEHVCEMAIRKVTIITIFGTFRNSTMKIDHYQLEKDKPMKGLRQEDLENQDLIMELRKEYGMTYNDFYVVLTDLDMKAKQYYEVPIAMKAVFDYIDTFSSRIREMEQQKRDGVTCKKEDKPRSLENFLSRFRWRRRLFVISAPNDEEWAYQQQLYALTSQACNLGLRHVSVLKLVGTDLLDMGGVLELYPINGSATVEREGISATLVRDIRNYFQISPEYFSMLLVGKDGNVKSWYPSPMWSMAIIYDLIDSMQLRRQEMAIQQSLGMRCPEDEYGGYGYHHHEGYQEGYHQGYGY</sequence>